<protein>
    <recommendedName>
        <fullName evidence="1">4-hydroxy-3-methylbut-2-en-1-yl diphosphate synthase (flavodoxin)</fullName>
        <ecNumber evidence="1">1.17.7.3</ecNumber>
    </recommendedName>
    <alternativeName>
        <fullName evidence="1">1-hydroxy-2-methyl-2-(E)-butenyl 4-diphosphate synthase</fullName>
    </alternativeName>
</protein>
<proteinExistence type="inferred from homology"/>
<gene>
    <name evidence="1" type="primary">ispG</name>
    <name type="ordered locus">ECS88_2691</name>
</gene>
<sequence length="372" mass="40684">MHNQAPIQRRKSTRIYVGNVPIGDGAPIAVQSMTNTRTTDVEATVNQIKALERVGADIVRVSVPTMDAAEAFKLIKQQVNVPLVADIHFDYRIALKVAEYGVDCLRINPGNIGNEERIRMVVDCARDKNIPIRIGVNAGSLEKDLQEKYGEPTPQALLESAMRHVDHLDRLNFDQFKVSVKASDVFLAVESYRLLAKQIDQPLHLGITEAGGARSGAVKSAIGLGLLLSEGIGDTLRVSLAADPVEEIKVGFDILKSLRIRSRGINFIACPTCSRQEFDVIGTVNALEQRLEDIITPMDVSIIGCVVNGPGEALVSTLGVTGGNKKSGLYEDGVRKDRLDNNDMIDQLEARIRAKASQLDEARRIDVQQVEK</sequence>
<evidence type="ECO:0000255" key="1">
    <source>
        <dbReference type="HAMAP-Rule" id="MF_00159"/>
    </source>
</evidence>
<accession>B7MI00</accession>
<organism>
    <name type="scientific">Escherichia coli O45:K1 (strain S88 / ExPEC)</name>
    <dbReference type="NCBI Taxonomy" id="585035"/>
    <lineage>
        <taxon>Bacteria</taxon>
        <taxon>Pseudomonadati</taxon>
        <taxon>Pseudomonadota</taxon>
        <taxon>Gammaproteobacteria</taxon>
        <taxon>Enterobacterales</taxon>
        <taxon>Enterobacteriaceae</taxon>
        <taxon>Escherichia</taxon>
    </lineage>
</organism>
<comment type="function">
    <text evidence="1">Converts 2C-methyl-D-erythritol 2,4-cyclodiphosphate (ME-2,4cPP) into 1-hydroxy-2-methyl-2-(E)-butenyl 4-diphosphate.</text>
</comment>
<comment type="catalytic activity">
    <reaction evidence="1">
        <text>(2E)-4-hydroxy-3-methylbut-2-enyl diphosphate + oxidized [flavodoxin] + H2O + 2 H(+) = 2-C-methyl-D-erythritol 2,4-cyclic diphosphate + reduced [flavodoxin]</text>
        <dbReference type="Rhea" id="RHEA:43604"/>
        <dbReference type="Rhea" id="RHEA-COMP:10622"/>
        <dbReference type="Rhea" id="RHEA-COMP:10623"/>
        <dbReference type="ChEBI" id="CHEBI:15377"/>
        <dbReference type="ChEBI" id="CHEBI:15378"/>
        <dbReference type="ChEBI" id="CHEBI:57618"/>
        <dbReference type="ChEBI" id="CHEBI:58210"/>
        <dbReference type="ChEBI" id="CHEBI:58483"/>
        <dbReference type="ChEBI" id="CHEBI:128753"/>
        <dbReference type="EC" id="1.17.7.3"/>
    </reaction>
</comment>
<comment type="cofactor">
    <cofactor evidence="1">
        <name>[4Fe-4S] cluster</name>
        <dbReference type="ChEBI" id="CHEBI:49883"/>
    </cofactor>
    <text evidence="1">Binds 1 [4Fe-4S] cluster.</text>
</comment>
<comment type="pathway">
    <text evidence="1">Isoprenoid biosynthesis; isopentenyl diphosphate biosynthesis via DXP pathway; isopentenyl diphosphate from 1-deoxy-D-xylulose 5-phosphate: step 5/6.</text>
</comment>
<comment type="similarity">
    <text evidence="1">Belongs to the IspG family.</text>
</comment>
<name>ISPG_ECO45</name>
<keyword id="KW-0004">4Fe-4S</keyword>
<keyword id="KW-0408">Iron</keyword>
<keyword id="KW-0411">Iron-sulfur</keyword>
<keyword id="KW-0414">Isoprene biosynthesis</keyword>
<keyword id="KW-0479">Metal-binding</keyword>
<keyword id="KW-0560">Oxidoreductase</keyword>
<keyword id="KW-1185">Reference proteome</keyword>
<dbReference type="EC" id="1.17.7.3" evidence="1"/>
<dbReference type="EMBL" id="CU928161">
    <property type="protein sequence ID" value="CAR03958.1"/>
    <property type="molecule type" value="Genomic_DNA"/>
</dbReference>
<dbReference type="RefSeq" id="WP_000551807.1">
    <property type="nucleotide sequence ID" value="NC_011742.1"/>
</dbReference>
<dbReference type="SMR" id="B7MI00"/>
<dbReference type="GeneID" id="86947404"/>
<dbReference type="KEGG" id="ecz:ECS88_2691"/>
<dbReference type="HOGENOM" id="CLU_042258_0_0_6"/>
<dbReference type="UniPathway" id="UPA00056">
    <property type="reaction ID" value="UER00096"/>
</dbReference>
<dbReference type="Proteomes" id="UP000000747">
    <property type="component" value="Chromosome"/>
</dbReference>
<dbReference type="GO" id="GO:0051539">
    <property type="term" value="F:4 iron, 4 sulfur cluster binding"/>
    <property type="evidence" value="ECO:0007669"/>
    <property type="project" value="UniProtKB-UniRule"/>
</dbReference>
<dbReference type="GO" id="GO:0046429">
    <property type="term" value="F:4-hydroxy-3-methylbut-2-en-1-yl diphosphate synthase activity (ferredoxin)"/>
    <property type="evidence" value="ECO:0007669"/>
    <property type="project" value="UniProtKB-UniRule"/>
</dbReference>
<dbReference type="GO" id="GO:0141197">
    <property type="term" value="F:4-hydroxy-3-methylbut-2-enyl-diphosphate synthase activity (flavodoxin)"/>
    <property type="evidence" value="ECO:0007669"/>
    <property type="project" value="UniProtKB-EC"/>
</dbReference>
<dbReference type="GO" id="GO:0005506">
    <property type="term" value="F:iron ion binding"/>
    <property type="evidence" value="ECO:0007669"/>
    <property type="project" value="InterPro"/>
</dbReference>
<dbReference type="GO" id="GO:0019288">
    <property type="term" value="P:isopentenyl diphosphate biosynthetic process, methylerythritol 4-phosphate pathway"/>
    <property type="evidence" value="ECO:0007669"/>
    <property type="project" value="UniProtKB-UniRule"/>
</dbReference>
<dbReference type="GO" id="GO:0016114">
    <property type="term" value="P:terpenoid biosynthetic process"/>
    <property type="evidence" value="ECO:0007669"/>
    <property type="project" value="InterPro"/>
</dbReference>
<dbReference type="FunFam" id="3.20.20.20:FF:000001">
    <property type="entry name" value="4-hydroxy-3-methylbut-2-en-1-yl diphosphate synthase (flavodoxin)"/>
    <property type="match status" value="1"/>
</dbReference>
<dbReference type="FunFam" id="3.30.413.10:FF:000002">
    <property type="entry name" value="4-hydroxy-3-methylbut-2-en-1-yl diphosphate synthase (flavodoxin)"/>
    <property type="match status" value="1"/>
</dbReference>
<dbReference type="Gene3D" id="3.20.20.20">
    <property type="entry name" value="Dihydropteroate synthase-like"/>
    <property type="match status" value="1"/>
</dbReference>
<dbReference type="Gene3D" id="3.30.413.10">
    <property type="entry name" value="Sulfite Reductase Hemoprotein, domain 1"/>
    <property type="match status" value="1"/>
</dbReference>
<dbReference type="HAMAP" id="MF_00159">
    <property type="entry name" value="IspG"/>
    <property type="match status" value="1"/>
</dbReference>
<dbReference type="InterPro" id="IPR011005">
    <property type="entry name" value="Dihydropteroate_synth-like_sf"/>
</dbReference>
<dbReference type="InterPro" id="IPR016425">
    <property type="entry name" value="IspG_bac"/>
</dbReference>
<dbReference type="InterPro" id="IPR004588">
    <property type="entry name" value="IspG_bac-typ"/>
</dbReference>
<dbReference type="InterPro" id="IPR045854">
    <property type="entry name" value="NO2/SO3_Rdtase_4Fe4S_sf"/>
</dbReference>
<dbReference type="NCBIfam" id="TIGR00612">
    <property type="entry name" value="ispG_gcpE"/>
    <property type="match status" value="1"/>
</dbReference>
<dbReference type="NCBIfam" id="NF001540">
    <property type="entry name" value="PRK00366.1"/>
    <property type="match status" value="1"/>
</dbReference>
<dbReference type="PANTHER" id="PTHR30454">
    <property type="entry name" value="4-HYDROXY-3-METHYLBUT-2-EN-1-YL DIPHOSPHATE SYNTHASE"/>
    <property type="match status" value="1"/>
</dbReference>
<dbReference type="PANTHER" id="PTHR30454:SF0">
    <property type="entry name" value="4-HYDROXY-3-METHYLBUT-2-EN-1-YL DIPHOSPHATE SYNTHASE (FERREDOXIN), CHLOROPLASTIC"/>
    <property type="match status" value="1"/>
</dbReference>
<dbReference type="Pfam" id="PF04551">
    <property type="entry name" value="GcpE"/>
    <property type="match status" value="1"/>
</dbReference>
<dbReference type="PIRSF" id="PIRSF004640">
    <property type="entry name" value="IspG"/>
    <property type="match status" value="1"/>
</dbReference>
<dbReference type="SUPFAM" id="SSF51717">
    <property type="entry name" value="Dihydropteroate synthetase-like"/>
    <property type="match status" value="1"/>
</dbReference>
<dbReference type="SUPFAM" id="SSF56014">
    <property type="entry name" value="Nitrite and sulphite reductase 4Fe-4S domain-like"/>
    <property type="match status" value="1"/>
</dbReference>
<feature type="chain" id="PRO_1000118166" description="4-hydroxy-3-methylbut-2-en-1-yl diphosphate synthase (flavodoxin)">
    <location>
        <begin position="1"/>
        <end position="372"/>
    </location>
</feature>
<feature type="binding site" evidence="1">
    <location>
        <position position="270"/>
    </location>
    <ligand>
        <name>[4Fe-4S] cluster</name>
        <dbReference type="ChEBI" id="CHEBI:49883"/>
    </ligand>
</feature>
<feature type="binding site" evidence="1">
    <location>
        <position position="273"/>
    </location>
    <ligand>
        <name>[4Fe-4S] cluster</name>
        <dbReference type="ChEBI" id="CHEBI:49883"/>
    </ligand>
</feature>
<feature type="binding site" evidence="1">
    <location>
        <position position="305"/>
    </location>
    <ligand>
        <name>[4Fe-4S] cluster</name>
        <dbReference type="ChEBI" id="CHEBI:49883"/>
    </ligand>
</feature>
<feature type="binding site" evidence="1">
    <location>
        <position position="312"/>
    </location>
    <ligand>
        <name>[4Fe-4S] cluster</name>
        <dbReference type="ChEBI" id="CHEBI:49883"/>
    </ligand>
</feature>
<reference key="1">
    <citation type="journal article" date="2009" name="PLoS Genet.">
        <title>Organised genome dynamics in the Escherichia coli species results in highly diverse adaptive paths.</title>
        <authorList>
            <person name="Touchon M."/>
            <person name="Hoede C."/>
            <person name="Tenaillon O."/>
            <person name="Barbe V."/>
            <person name="Baeriswyl S."/>
            <person name="Bidet P."/>
            <person name="Bingen E."/>
            <person name="Bonacorsi S."/>
            <person name="Bouchier C."/>
            <person name="Bouvet O."/>
            <person name="Calteau A."/>
            <person name="Chiapello H."/>
            <person name="Clermont O."/>
            <person name="Cruveiller S."/>
            <person name="Danchin A."/>
            <person name="Diard M."/>
            <person name="Dossat C."/>
            <person name="Karoui M.E."/>
            <person name="Frapy E."/>
            <person name="Garry L."/>
            <person name="Ghigo J.M."/>
            <person name="Gilles A.M."/>
            <person name="Johnson J."/>
            <person name="Le Bouguenec C."/>
            <person name="Lescat M."/>
            <person name="Mangenot S."/>
            <person name="Martinez-Jehanne V."/>
            <person name="Matic I."/>
            <person name="Nassif X."/>
            <person name="Oztas S."/>
            <person name="Petit M.A."/>
            <person name="Pichon C."/>
            <person name="Rouy Z."/>
            <person name="Ruf C.S."/>
            <person name="Schneider D."/>
            <person name="Tourret J."/>
            <person name="Vacherie B."/>
            <person name="Vallenet D."/>
            <person name="Medigue C."/>
            <person name="Rocha E.P.C."/>
            <person name="Denamur E."/>
        </authorList>
    </citation>
    <scope>NUCLEOTIDE SEQUENCE [LARGE SCALE GENOMIC DNA]</scope>
    <source>
        <strain>S88 / ExPEC</strain>
    </source>
</reference>